<evidence type="ECO:0000255" key="1">
    <source>
        <dbReference type="PROSITE-ProRule" id="PRU00407"/>
    </source>
</evidence>
<evidence type="ECO:0000255" key="2">
    <source>
        <dbReference type="PROSITE-ProRule" id="PRU01189"/>
    </source>
</evidence>
<evidence type="ECO:0000305" key="3"/>
<name>NHR18_CAEEL</name>
<proteinExistence type="evidence at transcript level"/>
<sequence>MPAPLFLSGSCEVCGDKTSGRHFGVMSCRACAAFFRRAATWNLEKRICPNGTCHTSVNGKFNCKQCRLKKCLDVGMDTRRFQTDRDLISCSAISQSLATFLGRPEFILCCEPDRASVLKTTIDVTRLVNIARDMLQKPTNHVLPSNSLEQLATTLDNMRCVESNKEVKFIEKYGKVETLKSWEQGFLRVVEWFSNFSEFRELNERLKLEIVKSCWFSWTRLDKLSETANKQINKMLGKSQLMVGNGACMNMNNFEIDLSWCTNYSLEQLKYFFQTPNGKKNFQQSIQDMIDLNPSSIEVSYMLLHLSLEHAGKRLHGDALDATENLVQVQANNLHKYYVEKLKLANYSSRLTQLMRITRTLEADIRIRIEKKQIADVFNIMKIDFSHPEMFEAT</sequence>
<organism>
    <name type="scientific">Caenorhabditis elegans</name>
    <dbReference type="NCBI Taxonomy" id="6239"/>
    <lineage>
        <taxon>Eukaryota</taxon>
        <taxon>Metazoa</taxon>
        <taxon>Ecdysozoa</taxon>
        <taxon>Nematoda</taxon>
        <taxon>Chromadorea</taxon>
        <taxon>Rhabditida</taxon>
        <taxon>Rhabditina</taxon>
        <taxon>Rhabditomorpha</taxon>
        <taxon>Rhabditoidea</taxon>
        <taxon>Rhabditidae</taxon>
        <taxon>Peloderinae</taxon>
        <taxon>Caenorhabditis</taxon>
    </lineage>
</organism>
<reference key="1">
    <citation type="journal article" date="1998" name="Science">
        <title>Genome sequence of the nematode C. elegans: a platform for investigating biology.</title>
        <authorList>
            <consortium name="The C. elegans sequencing consortium"/>
        </authorList>
    </citation>
    <scope>NUCLEOTIDE SEQUENCE [LARGE SCALE GENOMIC DNA]</scope>
    <source>
        <strain>Bristol N2</strain>
    </source>
</reference>
<reference key="2">
    <citation type="journal article" date="1999" name="Genome Res.">
        <title>The nuclear receptor superfamily has undergone extensive proliferation and diversification in nematodes.</title>
        <authorList>
            <person name="Sluder A.E."/>
            <person name="Mathews S.W."/>
            <person name="Hough D."/>
            <person name="Yin V.P."/>
            <person name="Maina C.V."/>
        </authorList>
    </citation>
    <scope>NUCLEOTIDE SEQUENCE [MRNA] OF 3-394</scope>
    <source>
        <strain>Bristol N2</strain>
    </source>
</reference>
<protein>
    <recommendedName>
        <fullName>Nuclear hormone receptor family member nhr-18</fullName>
    </recommendedName>
</protein>
<keyword id="KW-0238">DNA-binding</keyword>
<keyword id="KW-0479">Metal-binding</keyword>
<keyword id="KW-0539">Nucleus</keyword>
<keyword id="KW-0675">Receptor</keyword>
<keyword id="KW-1185">Reference proteome</keyword>
<keyword id="KW-0804">Transcription</keyword>
<keyword id="KW-0805">Transcription regulation</keyword>
<keyword id="KW-0862">Zinc</keyword>
<keyword id="KW-0863">Zinc-finger</keyword>
<gene>
    <name type="primary">nhr-18</name>
    <name type="ORF">F44C8.3</name>
</gene>
<accession>O16360</accession>
<accession>Q9XYC0</accession>
<dbReference type="EMBL" id="FO081357">
    <property type="protein sequence ID" value="CCD71003.1"/>
    <property type="molecule type" value="Genomic_DNA"/>
</dbReference>
<dbReference type="EMBL" id="AF083232">
    <property type="protein sequence ID" value="AAD03690.1"/>
    <property type="molecule type" value="mRNA"/>
</dbReference>
<dbReference type="PIR" id="T43356">
    <property type="entry name" value="T43356"/>
</dbReference>
<dbReference type="RefSeq" id="NP_503608.2">
    <property type="nucleotide sequence ID" value="NM_071207.5"/>
</dbReference>
<dbReference type="SMR" id="O16360"/>
<dbReference type="BioGRID" id="43763">
    <property type="interactions" value="1"/>
</dbReference>
<dbReference type="FunCoup" id="O16360">
    <property type="interactions" value="46"/>
</dbReference>
<dbReference type="STRING" id="6239.F44C8.3.1"/>
<dbReference type="PaxDb" id="6239-F44C8.3"/>
<dbReference type="EnsemblMetazoa" id="F44C8.3.1">
    <property type="protein sequence ID" value="F44C8.3.1"/>
    <property type="gene ID" value="WBGene00003617"/>
</dbReference>
<dbReference type="GeneID" id="178702"/>
<dbReference type="KEGG" id="cel:CELE_F44C8.3"/>
<dbReference type="UCSC" id="F44C8.3">
    <property type="organism name" value="c. elegans"/>
</dbReference>
<dbReference type="AGR" id="WB:WBGene00003617"/>
<dbReference type="CTD" id="178702"/>
<dbReference type="WormBase" id="F44C8.3">
    <property type="protein sequence ID" value="CE30796"/>
    <property type="gene ID" value="WBGene00003617"/>
    <property type="gene designation" value="nhr-18"/>
</dbReference>
<dbReference type="eggNOG" id="KOG3575">
    <property type="taxonomic scope" value="Eukaryota"/>
</dbReference>
<dbReference type="GeneTree" id="ENSGT00970000195928"/>
<dbReference type="HOGENOM" id="CLU_007368_7_1_1"/>
<dbReference type="InParanoid" id="O16360"/>
<dbReference type="PhylomeDB" id="O16360"/>
<dbReference type="PRO" id="PR:O16360"/>
<dbReference type="Proteomes" id="UP000001940">
    <property type="component" value="Chromosome V"/>
</dbReference>
<dbReference type="Bgee" id="WBGene00003617">
    <property type="expression patterns" value="Expressed in pharyngeal muscle cell (C elegans) and 3 other cell types or tissues"/>
</dbReference>
<dbReference type="GO" id="GO:0005634">
    <property type="term" value="C:nucleus"/>
    <property type="evidence" value="ECO:0007669"/>
    <property type="project" value="UniProtKB-SubCell"/>
</dbReference>
<dbReference type="GO" id="GO:0003700">
    <property type="term" value="F:DNA-binding transcription factor activity"/>
    <property type="evidence" value="ECO:0007669"/>
    <property type="project" value="InterPro"/>
</dbReference>
<dbReference type="GO" id="GO:0043565">
    <property type="term" value="F:sequence-specific DNA binding"/>
    <property type="evidence" value="ECO:0007669"/>
    <property type="project" value="InterPro"/>
</dbReference>
<dbReference type="GO" id="GO:0008270">
    <property type="term" value="F:zinc ion binding"/>
    <property type="evidence" value="ECO:0007669"/>
    <property type="project" value="UniProtKB-KW"/>
</dbReference>
<dbReference type="Gene3D" id="3.30.50.10">
    <property type="entry name" value="Erythroid Transcription Factor GATA-1, subunit A"/>
    <property type="match status" value="1"/>
</dbReference>
<dbReference type="Gene3D" id="1.10.565.10">
    <property type="entry name" value="Retinoid X Receptor"/>
    <property type="match status" value="1"/>
</dbReference>
<dbReference type="InterPro" id="IPR051152">
    <property type="entry name" value="C.elegans_Orphan_NR"/>
</dbReference>
<dbReference type="InterPro" id="IPR035500">
    <property type="entry name" value="NHR-like_dom_sf"/>
</dbReference>
<dbReference type="InterPro" id="IPR000536">
    <property type="entry name" value="Nucl_hrmn_rcpt_lig-bd"/>
</dbReference>
<dbReference type="InterPro" id="IPR001628">
    <property type="entry name" value="Znf_hrmn_rcpt"/>
</dbReference>
<dbReference type="InterPro" id="IPR013088">
    <property type="entry name" value="Znf_NHR/GATA"/>
</dbReference>
<dbReference type="PANTHER" id="PTHR45680">
    <property type="entry name" value="NUCLEAR HORMONE RECEPTOR FAMILY"/>
    <property type="match status" value="1"/>
</dbReference>
<dbReference type="PANTHER" id="PTHR45680:SF28">
    <property type="entry name" value="NUCLEAR HORMONE RECEPTOR FAMILY-RELATED"/>
    <property type="match status" value="1"/>
</dbReference>
<dbReference type="Pfam" id="PF00104">
    <property type="entry name" value="Hormone_recep"/>
    <property type="match status" value="1"/>
</dbReference>
<dbReference type="Pfam" id="PF00105">
    <property type="entry name" value="zf-C4"/>
    <property type="match status" value="1"/>
</dbReference>
<dbReference type="PRINTS" id="PR00047">
    <property type="entry name" value="STROIDFINGER"/>
</dbReference>
<dbReference type="SMART" id="SM00430">
    <property type="entry name" value="HOLI"/>
    <property type="match status" value="1"/>
</dbReference>
<dbReference type="SMART" id="SM00399">
    <property type="entry name" value="ZnF_C4"/>
    <property type="match status" value="1"/>
</dbReference>
<dbReference type="SUPFAM" id="SSF57716">
    <property type="entry name" value="Glucocorticoid receptor-like (DNA-binding domain)"/>
    <property type="match status" value="1"/>
</dbReference>
<dbReference type="SUPFAM" id="SSF48508">
    <property type="entry name" value="Nuclear receptor ligand-binding domain"/>
    <property type="match status" value="1"/>
</dbReference>
<dbReference type="PROSITE" id="PS51843">
    <property type="entry name" value="NR_LBD"/>
    <property type="match status" value="1"/>
</dbReference>
<dbReference type="PROSITE" id="PS00031">
    <property type="entry name" value="NUCLEAR_REC_DBD_1"/>
    <property type="match status" value="1"/>
</dbReference>
<dbReference type="PROSITE" id="PS51030">
    <property type="entry name" value="NUCLEAR_REC_DBD_2"/>
    <property type="match status" value="1"/>
</dbReference>
<feature type="chain" id="PRO_0000053769" description="Nuclear hormone receptor family member nhr-18">
    <location>
        <begin position="1"/>
        <end position="394"/>
    </location>
</feature>
<feature type="domain" description="NR LBD" evidence="2">
    <location>
        <begin position="134"/>
        <end position="394"/>
    </location>
</feature>
<feature type="DNA-binding region" description="Nuclear receptor" evidence="1">
    <location>
        <begin position="8"/>
        <end position="83"/>
    </location>
</feature>
<feature type="zinc finger region" description="NR C4-type" evidence="1">
    <location>
        <begin position="11"/>
        <end position="31"/>
    </location>
</feature>
<feature type="zinc finger region" description="NR C4-type" evidence="1">
    <location>
        <begin position="48"/>
        <end position="71"/>
    </location>
</feature>
<comment type="function">
    <text>Orphan nuclear receptor.</text>
</comment>
<comment type="subcellular location">
    <subcellularLocation>
        <location evidence="1">Nucleus</location>
    </subcellularLocation>
</comment>
<comment type="similarity">
    <text evidence="3">Belongs to the nuclear hormone receptor family.</text>
</comment>